<feature type="chain" id="PRO_0000143578" description="Maturase K">
    <location>
        <begin position="1"/>
        <end position="511"/>
    </location>
</feature>
<dbReference type="EMBL" id="AJ429339">
    <property type="protein sequence ID" value="CAD22235.1"/>
    <property type="molecule type" value="Genomic_DNA"/>
</dbReference>
<dbReference type="RefSeq" id="YP_009309519.1">
    <property type="nucleotide sequence ID" value="NC_031436.1"/>
</dbReference>
<dbReference type="GeneID" id="29294081"/>
<dbReference type="GO" id="GO:0009507">
    <property type="term" value="C:chloroplast"/>
    <property type="evidence" value="ECO:0007669"/>
    <property type="project" value="UniProtKB-SubCell"/>
</dbReference>
<dbReference type="GO" id="GO:0003723">
    <property type="term" value="F:RNA binding"/>
    <property type="evidence" value="ECO:0007669"/>
    <property type="project" value="UniProtKB-KW"/>
</dbReference>
<dbReference type="GO" id="GO:0006397">
    <property type="term" value="P:mRNA processing"/>
    <property type="evidence" value="ECO:0007669"/>
    <property type="project" value="UniProtKB-KW"/>
</dbReference>
<dbReference type="GO" id="GO:0008380">
    <property type="term" value="P:RNA splicing"/>
    <property type="evidence" value="ECO:0007669"/>
    <property type="project" value="UniProtKB-UniRule"/>
</dbReference>
<dbReference type="GO" id="GO:0008033">
    <property type="term" value="P:tRNA processing"/>
    <property type="evidence" value="ECO:0007669"/>
    <property type="project" value="UniProtKB-KW"/>
</dbReference>
<dbReference type="HAMAP" id="MF_01390">
    <property type="entry name" value="MatK"/>
    <property type="match status" value="1"/>
</dbReference>
<dbReference type="InterPro" id="IPR024937">
    <property type="entry name" value="Domain_X"/>
</dbReference>
<dbReference type="InterPro" id="IPR002866">
    <property type="entry name" value="Maturase_MatK"/>
</dbReference>
<dbReference type="InterPro" id="IPR024942">
    <property type="entry name" value="Maturase_MatK_N"/>
</dbReference>
<dbReference type="PANTHER" id="PTHR34811">
    <property type="entry name" value="MATURASE K"/>
    <property type="match status" value="1"/>
</dbReference>
<dbReference type="PANTHER" id="PTHR34811:SF1">
    <property type="entry name" value="MATURASE K"/>
    <property type="match status" value="1"/>
</dbReference>
<dbReference type="Pfam" id="PF01348">
    <property type="entry name" value="Intron_maturas2"/>
    <property type="match status" value="1"/>
</dbReference>
<dbReference type="Pfam" id="PF01824">
    <property type="entry name" value="MatK_N"/>
    <property type="match status" value="1"/>
</dbReference>
<evidence type="ECO:0000255" key="1">
    <source>
        <dbReference type="HAMAP-Rule" id="MF_01390"/>
    </source>
</evidence>
<keyword id="KW-0150">Chloroplast</keyword>
<keyword id="KW-0507">mRNA processing</keyword>
<keyword id="KW-0934">Plastid</keyword>
<keyword id="KW-0694">RNA-binding</keyword>
<keyword id="KW-0819">tRNA processing</keyword>
<protein>
    <recommendedName>
        <fullName evidence="1">Maturase K</fullName>
    </recommendedName>
    <alternativeName>
        <fullName evidence="1">Intron maturase</fullName>
    </alternativeName>
</protein>
<gene>
    <name evidence="1" type="primary">matK</name>
</gene>
<organism>
    <name type="scientific">Paulownia tomentosa</name>
    <name type="common">Princess tree</name>
    <dbReference type="NCBI Taxonomy" id="39353"/>
    <lineage>
        <taxon>Eukaryota</taxon>
        <taxon>Viridiplantae</taxon>
        <taxon>Streptophyta</taxon>
        <taxon>Embryophyta</taxon>
        <taxon>Tracheophyta</taxon>
        <taxon>Spermatophyta</taxon>
        <taxon>Magnoliopsida</taxon>
        <taxon>eudicotyledons</taxon>
        <taxon>Gunneridae</taxon>
        <taxon>Pentapetalae</taxon>
        <taxon>asterids</taxon>
        <taxon>lamiids</taxon>
        <taxon>Lamiales</taxon>
        <taxon>Paulowniaceae</taxon>
        <taxon>Paulownia</taxon>
    </lineage>
</organism>
<name>MATK_PAUTO</name>
<comment type="function">
    <text evidence="1">Usually encoded in the trnK tRNA gene intron. Probably assists in splicing its own and other chloroplast group II introns.</text>
</comment>
<comment type="subcellular location">
    <subcellularLocation>
        <location>Plastid</location>
        <location>Chloroplast</location>
    </subcellularLocation>
</comment>
<comment type="similarity">
    <text evidence="1">Belongs to the intron maturase 2 family. MatK subfamily.</text>
</comment>
<accession>Q8M930</accession>
<geneLocation type="chloroplast"/>
<sequence>MEEIQRYLQLERSQQHDFLYPLIFQEYIYAFAHDPGFSRSILSENPGYDNKSSLLIVKRLITRMYQQNHFIISPNDSNQNPFWARNKNLYSQIISEGFAFIVEIPFSLRLISCLEGKKKKIVKYQNLRSIHSIFPFLEDNLSHFNFVLDILIPHPVHVEILVQTLRYWVKDASSLHLLRFFLNEYYNWNSLITPKKASSSFSKRNQRLFLFLYNSHVCEYESIFVFLRNQSSHLRSTFSGILFERIYFYGKIERLVNVFVKVKDFQANLWLVKEPCMHYIRYQRKSILASKGTSFFMNKWKCYLVTFWQWHFSLWFHPRRIYINQLSNHSLEFLGYLSSVRMNPSVVRSQILENSFLINNAIKKVDTLVPIIPLIASLAKAKFCNVLGHPISKPVRADLSDSNIIDRFGRIYRNLSHYHSGSSKKKSLYRIKYILRLSCARTLARKHKSTVRTFLKRLGSELLEEFLMSEEDVLFLTFPKASSTLQGVYRSRIWYLDIISINDLANHKSKF</sequence>
<reference key="1">
    <citation type="journal article" date="2002" name="Mol. Phylogenet. Evol.">
        <title>Phylogenetics of asterids based on 3 coding and 3 non-coding chloroplast DNA markers and the utility of non-coding DNA at higher taxonomic levels.</title>
        <authorList>
            <person name="Bremer B."/>
            <person name="Bremer K."/>
            <person name="Heidari N."/>
            <person name="Erixon P."/>
            <person name="Olmstead R.G."/>
            <person name="Anderberg A.A."/>
            <person name="Kallersjo M."/>
            <person name="Barkhordarian E."/>
        </authorList>
    </citation>
    <scope>NUCLEOTIDE SEQUENCE [GENOMIC DNA]</scope>
</reference>
<proteinExistence type="inferred from homology"/>